<comment type="function">
    <text>The primary product of this enzyme is 4,2',4',6'-tetrahydroxychalcone (also termed naringenin-chalcone or chalcone) which can under specific conditions spontaneously isomerize into naringenin.</text>
</comment>
<comment type="catalytic activity">
    <reaction evidence="1">
        <text>(E)-4-coumaroyl-CoA + 3 malonyl-CoA + 3 H(+) = 2',4,4',6'-tetrahydroxychalcone + 3 CO2 + 4 CoA</text>
        <dbReference type="Rhea" id="RHEA:11128"/>
        <dbReference type="ChEBI" id="CHEBI:15378"/>
        <dbReference type="ChEBI" id="CHEBI:15413"/>
        <dbReference type="ChEBI" id="CHEBI:16526"/>
        <dbReference type="ChEBI" id="CHEBI:57287"/>
        <dbReference type="ChEBI" id="CHEBI:57384"/>
        <dbReference type="ChEBI" id="CHEBI:85008"/>
        <dbReference type="EC" id="2.3.1.74"/>
    </reaction>
</comment>
<comment type="pathway">
    <text>Secondary metabolite biosynthesis; flavonoid biosynthesis.</text>
</comment>
<comment type="similarity">
    <text evidence="2">Belongs to the thiolase-like superfamily. Chalcone/stilbene synthases family.</text>
</comment>
<keyword id="KW-0012">Acyltransferase</keyword>
<keyword id="KW-0284">Flavonoid biosynthesis</keyword>
<keyword id="KW-0808">Transferase</keyword>
<proteinExistence type="evidence at transcript level"/>
<gene>
    <name type="primary">CHS1</name>
</gene>
<accession>Q9ZRR8</accession>
<reference key="1">
    <citation type="journal article" date="1999" name="Plant Physiol.">
        <title>Flavan-containing cells delimit Frankia infected compartments in Casuarina glauca nodules.</title>
        <authorList>
            <person name="Laplaze L."/>
            <person name="Gherbi H."/>
            <person name="Frutz T."/>
            <person name="Pawlowski K."/>
            <person name="Franche C."/>
            <person name="Macheix J.J."/>
            <person name="Auguy F."/>
            <person name="Bogusz D."/>
            <person name="Duhoux E."/>
        </authorList>
    </citation>
    <scope>NUCLEOTIDE SEQUENCE [MRNA]</scope>
    <source>
        <tissue>Root nodule</tissue>
    </source>
</reference>
<feature type="chain" id="PRO_0000215964" description="Chalcone synthase">
    <location>
        <begin position="1"/>
        <end position="389"/>
    </location>
</feature>
<feature type="active site" evidence="1">
    <location>
        <position position="164"/>
    </location>
</feature>
<sequence>MVTVEEVRKAQRAEGPATVLAIGTATPPNCLDQSTYPDYYFRITNSEHKTELKEKFQRMCDKSMIKKRYMYLTEEILKEHPNMCAYMAPSLDARQDMVVVEIPKLGKEAAVKAIKEWGQPKSKITHLVFCTTSGVDMPGADYQLTKLLGLRPSVKRLMMYQQGCFAGGTVLRLAKDLAENNRGARVLVVCSEITAVTFRGPSDTHLDSLVGQALFGDGAAAIIVGADPLPEVEKPLFEVVSTAQTILPDSDGAIDGHLREVGVTFHLLKDVPGLISKNIEKSLVEAFQPLGISDWNSLFWIAHPGGPAILDQVEEKLALKPEKLGATRHVLSEYGNMSSACVLFILDEMRRKSAEKGLKTTGEGLDWGVLFGFGPGLTVETVVLHSLTT</sequence>
<protein>
    <recommendedName>
        <fullName>Chalcone synthase</fullName>
        <ecNumber>2.3.1.74</ecNumber>
    </recommendedName>
    <alternativeName>
        <fullName>Naringenin-chalcone synthase</fullName>
    </alternativeName>
</protein>
<name>CHS1_CASGL</name>
<dbReference type="EC" id="2.3.1.74"/>
<dbReference type="EMBL" id="AJ132323">
    <property type="protein sequence ID" value="CAA10641.1"/>
    <property type="molecule type" value="mRNA"/>
</dbReference>
<dbReference type="SMR" id="Q9ZRR8"/>
<dbReference type="UniPathway" id="UPA00154"/>
<dbReference type="GO" id="GO:0016210">
    <property type="term" value="F:naringenin-chalcone synthase activity"/>
    <property type="evidence" value="ECO:0007669"/>
    <property type="project" value="UniProtKB-EC"/>
</dbReference>
<dbReference type="GO" id="GO:0009813">
    <property type="term" value="P:flavonoid biosynthetic process"/>
    <property type="evidence" value="ECO:0007669"/>
    <property type="project" value="UniProtKB-UniPathway"/>
</dbReference>
<dbReference type="GO" id="GO:0030639">
    <property type="term" value="P:polyketide biosynthetic process"/>
    <property type="evidence" value="ECO:0007669"/>
    <property type="project" value="TreeGrafter"/>
</dbReference>
<dbReference type="CDD" id="cd00831">
    <property type="entry name" value="CHS_like"/>
    <property type="match status" value="1"/>
</dbReference>
<dbReference type="FunFam" id="3.40.47.10:FF:000014">
    <property type="entry name" value="Chalcone synthase 1"/>
    <property type="match status" value="1"/>
</dbReference>
<dbReference type="FunFam" id="3.40.47.10:FF:000025">
    <property type="entry name" value="Chalcone synthase 2"/>
    <property type="match status" value="1"/>
</dbReference>
<dbReference type="Gene3D" id="3.40.47.10">
    <property type="match status" value="2"/>
</dbReference>
<dbReference type="InterPro" id="IPR012328">
    <property type="entry name" value="Chalcone/stilbene_synt_C"/>
</dbReference>
<dbReference type="InterPro" id="IPR001099">
    <property type="entry name" value="Chalcone/stilbene_synt_N"/>
</dbReference>
<dbReference type="InterPro" id="IPR018088">
    <property type="entry name" value="Chalcone/stilbene_synthase_AS"/>
</dbReference>
<dbReference type="InterPro" id="IPR011141">
    <property type="entry name" value="Polyketide_synthase_type-III"/>
</dbReference>
<dbReference type="InterPro" id="IPR016039">
    <property type="entry name" value="Thiolase-like"/>
</dbReference>
<dbReference type="PANTHER" id="PTHR11877:SF80">
    <property type="entry name" value="CHALCONE SYNTHASE 1"/>
    <property type="match status" value="1"/>
</dbReference>
<dbReference type="PANTHER" id="PTHR11877">
    <property type="entry name" value="HYDROXYMETHYLGLUTARYL-COA SYNTHASE"/>
    <property type="match status" value="1"/>
</dbReference>
<dbReference type="Pfam" id="PF02797">
    <property type="entry name" value="Chal_sti_synt_C"/>
    <property type="match status" value="1"/>
</dbReference>
<dbReference type="Pfam" id="PF00195">
    <property type="entry name" value="Chal_sti_synt_N"/>
    <property type="match status" value="1"/>
</dbReference>
<dbReference type="PIRSF" id="PIRSF000451">
    <property type="entry name" value="PKS_III"/>
    <property type="match status" value="1"/>
</dbReference>
<dbReference type="SUPFAM" id="SSF53901">
    <property type="entry name" value="Thiolase-like"/>
    <property type="match status" value="2"/>
</dbReference>
<dbReference type="PROSITE" id="PS00441">
    <property type="entry name" value="CHALCONE_SYNTH"/>
    <property type="match status" value="1"/>
</dbReference>
<organism>
    <name type="scientific">Casuarina glauca</name>
    <name type="common">Swamp oak</name>
    <dbReference type="NCBI Taxonomy" id="3522"/>
    <lineage>
        <taxon>Eukaryota</taxon>
        <taxon>Viridiplantae</taxon>
        <taxon>Streptophyta</taxon>
        <taxon>Embryophyta</taxon>
        <taxon>Tracheophyta</taxon>
        <taxon>Spermatophyta</taxon>
        <taxon>Magnoliopsida</taxon>
        <taxon>eudicotyledons</taxon>
        <taxon>Gunneridae</taxon>
        <taxon>Pentapetalae</taxon>
        <taxon>rosids</taxon>
        <taxon>fabids</taxon>
        <taxon>Fagales</taxon>
        <taxon>Casuarinaceae</taxon>
        <taxon>Casuarina</taxon>
    </lineage>
</organism>
<evidence type="ECO:0000255" key="1">
    <source>
        <dbReference type="PROSITE-ProRule" id="PRU10023"/>
    </source>
</evidence>
<evidence type="ECO:0000305" key="2"/>